<feature type="chain" id="PRO_0000240865" description="Transmembrane protein 101">
    <location>
        <begin position="1"/>
        <end position="257"/>
    </location>
</feature>
<feature type="transmembrane region" description="Helical" evidence="2">
    <location>
        <begin position="24"/>
        <end position="40"/>
    </location>
</feature>
<feature type="transmembrane region" description="Helical" evidence="2">
    <location>
        <begin position="52"/>
        <end position="72"/>
    </location>
</feature>
<feature type="transmembrane region" description="Helical" evidence="2">
    <location>
        <begin position="77"/>
        <end position="97"/>
    </location>
</feature>
<feature type="transmembrane region" description="Helical" evidence="2">
    <location>
        <begin position="110"/>
        <end position="130"/>
    </location>
</feature>
<feature type="transmembrane region" description="Helical" evidence="2">
    <location>
        <begin position="139"/>
        <end position="159"/>
    </location>
</feature>
<feature type="transmembrane region" description="Helical" evidence="2">
    <location>
        <begin position="182"/>
        <end position="202"/>
    </location>
</feature>
<feature type="transmembrane region" description="Helical" evidence="2">
    <location>
        <begin position="206"/>
        <end position="226"/>
    </location>
</feature>
<feature type="transmembrane region" description="Helical" evidence="2">
    <location>
        <begin position="233"/>
        <end position="253"/>
    </location>
</feature>
<feature type="sequence conflict" description="In Ref. 1; BAB28037." evidence="3" ref="1">
    <original>L</original>
    <variation>P</variation>
    <location>
        <position position="12"/>
    </location>
</feature>
<evidence type="ECO:0000250" key="1"/>
<evidence type="ECO:0000255" key="2"/>
<evidence type="ECO:0000305" key="3"/>
<dbReference type="EMBL" id="AK012106">
    <property type="protein sequence ID" value="BAB28037.1"/>
    <property type="molecule type" value="mRNA"/>
</dbReference>
<dbReference type="EMBL" id="AK041154">
    <property type="protein sequence ID" value="BAC30841.1"/>
    <property type="molecule type" value="mRNA"/>
</dbReference>
<dbReference type="EMBL" id="AK049378">
    <property type="protein sequence ID" value="BAC33721.1"/>
    <property type="molecule type" value="mRNA"/>
</dbReference>
<dbReference type="EMBL" id="AK140260">
    <property type="protein sequence ID" value="BAE24302.1"/>
    <property type="molecule type" value="mRNA"/>
</dbReference>
<dbReference type="EMBL" id="BC011109">
    <property type="protein sequence ID" value="AAH11109.1"/>
    <property type="molecule type" value="mRNA"/>
</dbReference>
<dbReference type="CCDS" id="CCDS25489.1"/>
<dbReference type="RefSeq" id="NP_083925.2">
    <property type="nucleotide sequence ID" value="NM_029649.2"/>
</dbReference>
<dbReference type="FunCoup" id="Q91VP7">
    <property type="interactions" value="109"/>
</dbReference>
<dbReference type="STRING" id="10090.ENSMUSP00000021296"/>
<dbReference type="PaxDb" id="10090-ENSMUSP00000021296"/>
<dbReference type="ProteomicsDB" id="259518"/>
<dbReference type="Antibodypedia" id="54322">
    <property type="antibodies" value="67 antibodies from 20 providers"/>
</dbReference>
<dbReference type="Ensembl" id="ENSMUST00000021296.7">
    <property type="protein sequence ID" value="ENSMUSP00000021296.7"/>
    <property type="gene ID" value="ENSMUSG00000020921.7"/>
</dbReference>
<dbReference type="GeneID" id="76547"/>
<dbReference type="KEGG" id="mmu:76547"/>
<dbReference type="UCSC" id="uc007lqr.2">
    <property type="organism name" value="mouse"/>
</dbReference>
<dbReference type="AGR" id="MGI:1923797"/>
<dbReference type="CTD" id="84336"/>
<dbReference type="MGI" id="MGI:1923797">
    <property type="gene designation" value="Tmem101"/>
</dbReference>
<dbReference type="VEuPathDB" id="HostDB:ENSMUSG00000020921"/>
<dbReference type="eggNOG" id="ENOG502QRKU">
    <property type="taxonomic scope" value="Eukaryota"/>
</dbReference>
<dbReference type="GeneTree" id="ENSGT00390000011938"/>
<dbReference type="HOGENOM" id="CLU_094617_0_0_1"/>
<dbReference type="InParanoid" id="Q91VP7"/>
<dbReference type="OMA" id="HVEFWNQ"/>
<dbReference type="OrthoDB" id="22760at9989"/>
<dbReference type="PhylomeDB" id="Q91VP7"/>
<dbReference type="TreeFam" id="TF332810"/>
<dbReference type="BioGRID-ORCS" id="76547">
    <property type="hits" value="2 hits in 78 CRISPR screens"/>
</dbReference>
<dbReference type="PRO" id="PR:Q91VP7"/>
<dbReference type="Proteomes" id="UP000000589">
    <property type="component" value="Chromosome 11"/>
</dbReference>
<dbReference type="RNAct" id="Q91VP7">
    <property type="molecule type" value="protein"/>
</dbReference>
<dbReference type="Bgee" id="ENSMUSG00000020921">
    <property type="expression patterns" value="Expressed in floor plate of midbrain and 252 other cell types or tissues"/>
</dbReference>
<dbReference type="GO" id="GO:0016020">
    <property type="term" value="C:membrane"/>
    <property type="evidence" value="ECO:0007669"/>
    <property type="project" value="UniProtKB-SubCell"/>
</dbReference>
<dbReference type="InterPro" id="IPR029371">
    <property type="entry name" value="TMEM101"/>
</dbReference>
<dbReference type="PANTHER" id="PTHR31034">
    <property type="entry name" value="TRANSMEMBRANE PROTEIN 101"/>
    <property type="match status" value="1"/>
</dbReference>
<dbReference type="PANTHER" id="PTHR31034:SF2">
    <property type="entry name" value="TRANSMEMBRANE PROTEIN 101"/>
    <property type="match status" value="1"/>
</dbReference>
<dbReference type="Pfam" id="PF15111">
    <property type="entry name" value="TMEM101"/>
    <property type="match status" value="1"/>
</dbReference>
<organism>
    <name type="scientific">Mus musculus</name>
    <name type="common">Mouse</name>
    <dbReference type="NCBI Taxonomy" id="10090"/>
    <lineage>
        <taxon>Eukaryota</taxon>
        <taxon>Metazoa</taxon>
        <taxon>Chordata</taxon>
        <taxon>Craniata</taxon>
        <taxon>Vertebrata</taxon>
        <taxon>Euteleostomi</taxon>
        <taxon>Mammalia</taxon>
        <taxon>Eutheria</taxon>
        <taxon>Euarchontoglires</taxon>
        <taxon>Glires</taxon>
        <taxon>Rodentia</taxon>
        <taxon>Myomorpha</taxon>
        <taxon>Muroidea</taxon>
        <taxon>Muridae</taxon>
        <taxon>Murinae</taxon>
        <taxon>Mus</taxon>
        <taxon>Mus</taxon>
    </lineage>
</organism>
<name>TM101_MOUSE</name>
<keyword id="KW-0472">Membrane</keyword>
<keyword id="KW-1185">Reference proteome</keyword>
<keyword id="KW-0812">Transmembrane</keyword>
<keyword id="KW-1133">Transmembrane helix</keyword>
<sequence length="257" mass="28783">MASKIGSRRWMLQLIMQLGSVLLTRCPFWGCFSQLMLYAERAEARRKPDIPVPYLYFDMGAAVLCASFMSFGVKRRWFALGAALQLAISTYTAYIGGYVHYGDWLKVRMYSRTVAIIGGFLVLASGAGELYRRKPRSRSLQSTGQVFLGIYLICVAYSLQHSKEDRLAYLNHLPGGELMVQLFFVLYGVLALAFLSGYYVTLAAQILAVLLPPVMLLIDGNVSYWHNTRRVEFWNQMKLLGESVGIFGAAVILATDG</sequence>
<reference key="1">
    <citation type="journal article" date="2005" name="Science">
        <title>The transcriptional landscape of the mammalian genome.</title>
        <authorList>
            <person name="Carninci P."/>
            <person name="Kasukawa T."/>
            <person name="Katayama S."/>
            <person name="Gough J."/>
            <person name="Frith M.C."/>
            <person name="Maeda N."/>
            <person name="Oyama R."/>
            <person name="Ravasi T."/>
            <person name="Lenhard B."/>
            <person name="Wells C."/>
            <person name="Kodzius R."/>
            <person name="Shimokawa K."/>
            <person name="Bajic V.B."/>
            <person name="Brenner S.E."/>
            <person name="Batalov S."/>
            <person name="Forrest A.R."/>
            <person name="Zavolan M."/>
            <person name="Davis M.J."/>
            <person name="Wilming L.G."/>
            <person name="Aidinis V."/>
            <person name="Allen J.E."/>
            <person name="Ambesi-Impiombato A."/>
            <person name="Apweiler R."/>
            <person name="Aturaliya R.N."/>
            <person name="Bailey T.L."/>
            <person name="Bansal M."/>
            <person name="Baxter L."/>
            <person name="Beisel K.W."/>
            <person name="Bersano T."/>
            <person name="Bono H."/>
            <person name="Chalk A.M."/>
            <person name="Chiu K.P."/>
            <person name="Choudhary V."/>
            <person name="Christoffels A."/>
            <person name="Clutterbuck D.R."/>
            <person name="Crowe M.L."/>
            <person name="Dalla E."/>
            <person name="Dalrymple B.P."/>
            <person name="de Bono B."/>
            <person name="Della Gatta G."/>
            <person name="di Bernardo D."/>
            <person name="Down T."/>
            <person name="Engstrom P."/>
            <person name="Fagiolini M."/>
            <person name="Faulkner G."/>
            <person name="Fletcher C.F."/>
            <person name="Fukushima T."/>
            <person name="Furuno M."/>
            <person name="Futaki S."/>
            <person name="Gariboldi M."/>
            <person name="Georgii-Hemming P."/>
            <person name="Gingeras T.R."/>
            <person name="Gojobori T."/>
            <person name="Green R.E."/>
            <person name="Gustincich S."/>
            <person name="Harbers M."/>
            <person name="Hayashi Y."/>
            <person name="Hensch T.K."/>
            <person name="Hirokawa N."/>
            <person name="Hill D."/>
            <person name="Huminiecki L."/>
            <person name="Iacono M."/>
            <person name="Ikeo K."/>
            <person name="Iwama A."/>
            <person name="Ishikawa T."/>
            <person name="Jakt M."/>
            <person name="Kanapin A."/>
            <person name="Katoh M."/>
            <person name="Kawasawa Y."/>
            <person name="Kelso J."/>
            <person name="Kitamura H."/>
            <person name="Kitano H."/>
            <person name="Kollias G."/>
            <person name="Krishnan S.P."/>
            <person name="Kruger A."/>
            <person name="Kummerfeld S.K."/>
            <person name="Kurochkin I.V."/>
            <person name="Lareau L.F."/>
            <person name="Lazarevic D."/>
            <person name="Lipovich L."/>
            <person name="Liu J."/>
            <person name="Liuni S."/>
            <person name="McWilliam S."/>
            <person name="Madan Babu M."/>
            <person name="Madera M."/>
            <person name="Marchionni L."/>
            <person name="Matsuda H."/>
            <person name="Matsuzawa S."/>
            <person name="Miki H."/>
            <person name="Mignone F."/>
            <person name="Miyake S."/>
            <person name="Morris K."/>
            <person name="Mottagui-Tabar S."/>
            <person name="Mulder N."/>
            <person name="Nakano N."/>
            <person name="Nakauchi H."/>
            <person name="Ng P."/>
            <person name="Nilsson R."/>
            <person name="Nishiguchi S."/>
            <person name="Nishikawa S."/>
            <person name="Nori F."/>
            <person name="Ohara O."/>
            <person name="Okazaki Y."/>
            <person name="Orlando V."/>
            <person name="Pang K.C."/>
            <person name="Pavan W.J."/>
            <person name="Pavesi G."/>
            <person name="Pesole G."/>
            <person name="Petrovsky N."/>
            <person name="Piazza S."/>
            <person name="Reed J."/>
            <person name="Reid J.F."/>
            <person name="Ring B.Z."/>
            <person name="Ringwald M."/>
            <person name="Rost B."/>
            <person name="Ruan Y."/>
            <person name="Salzberg S.L."/>
            <person name="Sandelin A."/>
            <person name="Schneider C."/>
            <person name="Schoenbach C."/>
            <person name="Sekiguchi K."/>
            <person name="Semple C.A."/>
            <person name="Seno S."/>
            <person name="Sessa L."/>
            <person name="Sheng Y."/>
            <person name="Shibata Y."/>
            <person name="Shimada H."/>
            <person name="Shimada K."/>
            <person name="Silva D."/>
            <person name="Sinclair B."/>
            <person name="Sperling S."/>
            <person name="Stupka E."/>
            <person name="Sugiura K."/>
            <person name="Sultana R."/>
            <person name="Takenaka Y."/>
            <person name="Taki K."/>
            <person name="Tammoja K."/>
            <person name="Tan S.L."/>
            <person name="Tang S."/>
            <person name="Taylor M.S."/>
            <person name="Tegner J."/>
            <person name="Teichmann S.A."/>
            <person name="Ueda H.R."/>
            <person name="van Nimwegen E."/>
            <person name="Verardo R."/>
            <person name="Wei C.L."/>
            <person name="Yagi K."/>
            <person name="Yamanishi H."/>
            <person name="Zabarovsky E."/>
            <person name="Zhu S."/>
            <person name="Zimmer A."/>
            <person name="Hide W."/>
            <person name="Bult C."/>
            <person name="Grimmond S.M."/>
            <person name="Teasdale R.D."/>
            <person name="Liu E.T."/>
            <person name="Brusic V."/>
            <person name="Quackenbush J."/>
            <person name="Wahlestedt C."/>
            <person name="Mattick J.S."/>
            <person name="Hume D.A."/>
            <person name="Kai C."/>
            <person name="Sasaki D."/>
            <person name="Tomaru Y."/>
            <person name="Fukuda S."/>
            <person name="Kanamori-Katayama M."/>
            <person name="Suzuki M."/>
            <person name="Aoki J."/>
            <person name="Arakawa T."/>
            <person name="Iida J."/>
            <person name="Imamura K."/>
            <person name="Itoh M."/>
            <person name="Kato T."/>
            <person name="Kawaji H."/>
            <person name="Kawagashira N."/>
            <person name="Kawashima T."/>
            <person name="Kojima M."/>
            <person name="Kondo S."/>
            <person name="Konno H."/>
            <person name="Nakano K."/>
            <person name="Ninomiya N."/>
            <person name="Nishio T."/>
            <person name="Okada M."/>
            <person name="Plessy C."/>
            <person name="Shibata K."/>
            <person name="Shiraki T."/>
            <person name="Suzuki S."/>
            <person name="Tagami M."/>
            <person name="Waki K."/>
            <person name="Watahiki A."/>
            <person name="Okamura-Oho Y."/>
            <person name="Suzuki H."/>
            <person name="Kawai J."/>
            <person name="Hayashizaki Y."/>
        </authorList>
    </citation>
    <scope>NUCLEOTIDE SEQUENCE [LARGE SCALE MRNA]</scope>
    <source>
        <strain>C57BL/6J</strain>
        <tissue>Aorta</tissue>
        <tissue>Corpora quadrigemina</tissue>
        <tissue>Embryo</tissue>
        <tissue>Vein</tissue>
    </source>
</reference>
<reference key="2">
    <citation type="journal article" date="2004" name="Genome Res.">
        <title>The status, quality, and expansion of the NIH full-length cDNA project: the Mammalian Gene Collection (MGC).</title>
        <authorList>
            <consortium name="The MGC Project Team"/>
        </authorList>
    </citation>
    <scope>NUCLEOTIDE SEQUENCE [LARGE SCALE MRNA]</scope>
    <source>
        <strain>NMRI</strain>
        <tissue>Mammary tumor</tissue>
    </source>
</reference>
<protein>
    <recommendedName>
        <fullName>Transmembrane protein 101</fullName>
    </recommendedName>
</protein>
<gene>
    <name type="primary">Tmem101</name>
</gene>
<proteinExistence type="evidence at transcript level"/>
<accession>Q91VP7</accession>
<accession>Q9CZW0</accession>
<comment type="function">
    <text evidence="1">May activate NF-kappa-B signaling pathways.</text>
</comment>
<comment type="subcellular location">
    <subcellularLocation>
        <location evidence="3">Membrane</location>
        <topology evidence="3">Multi-pass membrane protein</topology>
    </subcellularLocation>
</comment>